<dbReference type="EMBL" id="CP000319">
    <property type="protein sequence ID" value="ABE60967.1"/>
    <property type="molecule type" value="Genomic_DNA"/>
</dbReference>
<dbReference type="RefSeq" id="WP_011508674.1">
    <property type="nucleotide sequence ID" value="NC_007964.1"/>
</dbReference>
<dbReference type="SMR" id="Q1QS30"/>
<dbReference type="STRING" id="323097.Nham_0066"/>
<dbReference type="KEGG" id="nha:Nham_0066"/>
<dbReference type="eggNOG" id="COG0776">
    <property type="taxonomic scope" value="Bacteria"/>
</dbReference>
<dbReference type="HOGENOM" id="CLU_105066_2_0_5"/>
<dbReference type="OrthoDB" id="9804203at2"/>
<dbReference type="Proteomes" id="UP000001953">
    <property type="component" value="Chromosome"/>
</dbReference>
<dbReference type="GO" id="GO:0005694">
    <property type="term" value="C:chromosome"/>
    <property type="evidence" value="ECO:0007669"/>
    <property type="project" value="InterPro"/>
</dbReference>
<dbReference type="GO" id="GO:0005829">
    <property type="term" value="C:cytosol"/>
    <property type="evidence" value="ECO:0007669"/>
    <property type="project" value="TreeGrafter"/>
</dbReference>
<dbReference type="GO" id="GO:0003677">
    <property type="term" value="F:DNA binding"/>
    <property type="evidence" value="ECO:0007669"/>
    <property type="project" value="UniProtKB-UniRule"/>
</dbReference>
<dbReference type="GO" id="GO:0030527">
    <property type="term" value="F:structural constituent of chromatin"/>
    <property type="evidence" value="ECO:0007669"/>
    <property type="project" value="InterPro"/>
</dbReference>
<dbReference type="GO" id="GO:0006310">
    <property type="term" value="P:DNA recombination"/>
    <property type="evidence" value="ECO:0007669"/>
    <property type="project" value="UniProtKB-UniRule"/>
</dbReference>
<dbReference type="GO" id="GO:0006355">
    <property type="term" value="P:regulation of DNA-templated transcription"/>
    <property type="evidence" value="ECO:0007669"/>
    <property type="project" value="UniProtKB-UniRule"/>
</dbReference>
<dbReference type="GO" id="GO:0006417">
    <property type="term" value="P:regulation of translation"/>
    <property type="evidence" value="ECO:0007669"/>
    <property type="project" value="UniProtKB-UniRule"/>
</dbReference>
<dbReference type="CDD" id="cd13836">
    <property type="entry name" value="IHF_B"/>
    <property type="match status" value="1"/>
</dbReference>
<dbReference type="FunFam" id="4.10.520.10:FF:000008">
    <property type="entry name" value="Integration host factor subunit beta"/>
    <property type="match status" value="1"/>
</dbReference>
<dbReference type="Gene3D" id="4.10.520.10">
    <property type="entry name" value="IHF-like DNA-binding proteins"/>
    <property type="match status" value="1"/>
</dbReference>
<dbReference type="HAMAP" id="MF_00381">
    <property type="entry name" value="IHF_beta"/>
    <property type="match status" value="1"/>
</dbReference>
<dbReference type="InterPro" id="IPR000119">
    <property type="entry name" value="Hist_DNA-bd"/>
</dbReference>
<dbReference type="InterPro" id="IPR020816">
    <property type="entry name" value="Histone-like_DNA-bd_CS"/>
</dbReference>
<dbReference type="InterPro" id="IPR010992">
    <property type="entry name" value="IHF-like_DNA-bd_dom_sf"/>
</dbReference>
<dbReference type="InterPro" id="IPR005685">
    <property type="entry name" value="IHF_beta"/>
</dbReference>
<dbReference type="NCBIfam" id="TIGR00988">
    <property type="entry name" value="hip"/>
    <property type="match status" value="1"/>
</dbReference>
<dbReference type="NCBIfam" id="NF001222">
    <property type="entry name" value="PRK00199.1"/>
    <property type="match status" value="1"/>
</dbReference>
<dbReference type="PANTHER" id="PTHR33175">
    <property type="entry name" value="DNA-BINDING PROTEIN HU"/>
    <property type="match status" value="1"/>
</dbReference>
<dbReference type="PANTHER" id="PTHR33175:SF5">
    <property type="entry name" value="INTEGRATION HOST FACTOR SUBUNIT BETA"/>
    <property type="match status" value="1"/>
</dbReference>
<dbReference type="Pfam" id="PF00216">
    <property type="entry name" value="Bac_DNA_binding"/>
    <property type="match status" value="1"/>
</dbReference>
<dbReference type="PRINTS" id="PR01727">
    <property type="entry name" value="DNABINDINGHU"/>
</dbReference>
<dbReference type="SMART" id="SM00411">
    <property type="entry name" value="BHL"/>
    <property type="match status" value="1"/>
</dbReference>
<dbReference type="SUPFAM" id="SSF47729">
    <property type="entry name" value="IHF-like DNA-binding proteins"/>
    <property type="match status" value="1"/>
</dbReference>
<dbReference type="PROSITE" id="PS00045">
    <property type="entry name" value="HISTONE_LIKE"/>
    <property type="match status" value="1"/>
</dbReference>
<keyword id="KW-0233">DNA recombination</keyword>
<keyword id="KW-0238">DNA-binding</keyword>
<keyword id="KW-1185">Reference proteome</keyword>
<keyword id="KW-0804">Transcription</keyword>
<keyword id="KW-0805">Transcription regulation</keyword>
<keyword id="KW-0810">Translation regulation</keyword>
<proteinExistence type="inferred from homology"/>
<feature type="chain" id="PRO_1000060621" description="Integration host factor subunit beta">
    <location>
        <begin position="1"/>
        <end position="101"/>
    </location>
</feature>
<reference key="1">
    <citation type="submission" date="2006-03" db="EMBL/GenBank/DDBJ databases">
        <title>Complete sequence of chromosome of Nitrobacter hamburgensis X14.</title>
        <authorList>
            <consortium name="US DOE Joint Genome Institute"/>
            <person name="Copeland A."/>
            <person name="Lucas S."/>
            <person name="Lapidus A."/>
            <person name="Barry K."/>
            <person name="Detter J.C."/>
            <person name="Glavina del Rio T."/>
            <person name="Hammon N."/>
            <person name="Israni S."/>
            <person name="Dalin E."/>
            <person name="Tice H."/>
            <person name="Pitluck S."/>
            <person name="Chain P."/>
            <person name="Malfatti S."/>
            <person name="Shin M."/>
            <person name="Vergez L."/>
            <person name="Schmutz J."/>
            <person name="Larimer F."/>
            <person name="Land M."/>
            <person name="Hauser L."/>
            <person name="Kyrpides N."/>
            <person name="Ivanova N."/>
            <person name="Ward B."/>
            <person name="Arp D."/>
            <person name="Klotz M."/>
            <person name="Stein L."/>
            <person name="O'Mullan G."/>
            <person name="Starkenburg S."/>
            <person name="Sayavedra L."/>
            <person name="Poret-Peterson A.T."/>
            <person name="Gentry M.E."/>
            <person name="Bruce D."/>
            <person name="Richardson P."/>
        </authorList>
    </citation>
    <scope>NUCLEOTIDE SEQUENCE [LARGE SCALE GENOMIC DNA]</scope>
    <source>
        <strain>DSM 10229 / NCIMB 13809 / X14</strain>
    </source>
</reference>
<gene>
    <name evidence="1" type="primary">ihfB</name>
    <name evidence="1" type="synonym">himD</name>
    <name type="ordered locus">Nham_0066</name>
</gene>
<protein>
    <recommendedName>
        <fullName evidence="1">Integration host factor subunit beta</fullName>
        <shortName evidence="1">IHF-beta</shortName>
    </recommendedName>
</protein>
<evidence type="ECO:0000255" key="1">
    <source>
        <dbReference type="HAMAP-Rule" id="MF_00381"/>
    </source>
</evidence>
<name>IHFB_NITHX</name>
<comment type="function">
    <text evidence="1">This protein is one of the two subunits of integration host factor, a specific DNA-binding protein that functions in genetic recombination as well as in transcriptional and translational control.</text>
</comment>
<comment type="subunit">
    <text evidence="1">Heterodimer of an alpha and a beta chain.</text>
</comment>
<comment type="similarity">
    <text evidence="1">Belongs to the bacterial histone-like protein family.</text>
</comment>
<organism>
    <name type="scientific">Nitrobacter hamburgensis (strain DSM 10229 / NCIMB 13809 / X14)</name>
    <dbReference type="NCBI Taxonomy" id="323097"/>
    <lineage>
        <taxon>Bacteria</taxon>
        <taxon>Pseudomonadati</taxon>
        <taxon>Pseudomonadota</taxon>
        <taxon>Alphaproteobacteria</taxon>
        <taxon>Hyphomicrobiales</taxon>
        <taxon>Nitrobacteraceae</taxon>
        <taxon>Nitrobacter</taxon>
    </lineage>
</organism>
<accession>Q1QS30</accession>
<sequence length="101" mass="11432">MIKSELVQRIAEHNPHLYQRDVENIVNAILDEIVTALARGDRVELRGFGAFSVKHRPARAGRNPRTGEHVPVDQKSVPFFKTGKEMRERLNRENATSEASA</sequence>